<protein>
    <recommendedName>
        <fullName evidence="1">Peptide chain release factor 2</fullName>
        <shortName evidence="1">RF-2</shortName>
    </recommendedName>
</protein>
<proteinExistence type="inferred from homology"/>
<feature type="chain" id="PRO_1000202714" description="Peptide chain release factor 2">
    <location>
        <begin position="1"/>
        <end position="368"/>
    </location>
</feature>
<feature type="modified residue" description="N5-methylglutamine" evidence="1">
    <location>
        <position position="250"/>
    </location>
</feature>
<name>RF2_RICAE</name>
<comment type="function">
    <text evidence="1">Peptide chain release factor 2 directs the termination of translation in response to the peptide chain termination codons UGA and UAA.</text>
</comment>
<comment type="subcellular location">
    <subcellularLocation>
        <location evidence="1">Cytoplasm</location>
    </subcellularLocation>
</comment>
<comment type="PTM">
    <text evidence="1">Methylated by PrmC. Methylation increases the termination efficiency of RF2.</text>
</comment>
<comment type="similarity">
    <text evidence="1">Belongs to the prokaryotic/mitochondrial release factor family.</text>
</comment>
<gene>
    <name evidence="1" type="primary">prfB</name>
    <name type="ordered locus">RAF_ORF0343</name>
</gene>
<accession>C3PMX2</accession>
<evidence type="ECO:0000255" key="1">
    <source>
        <dbReference type="HAMAP-Rule" id="MF_00094"/>
    </source>
</evidence>
<sequence length="368" mass="41577">MRTEIENYVKKIEQSLELLWRSLDVEASTERLNALEELTADPSLWNDQANAQKLLREKSNLEEKLNAFNKLKSNLKDALELEEMAEAENDLETLSQIEQDLKNLSIIAAKFETECLFSGEADGNNCFLEINAGAGGTESHDWASIMMRMYLRFAERLGFKTEIINMINGEEAGIKSCTIRIIGKRAYGWFKTETGVHRLVRISPFNAAGKRMTSFASSWVYPEIDDNIAITIEDKDLRIDTFRASGAGGQHVNTTDSAVRITHIPTGTVTQCQSDRSQHKNKAQAMKMLQAKLYELEMQKRTDSVNEQNATKTDNSWGHQIRSYVLQPYHMVKDLRTDYETSDTKGVLDGDLEEFVSANLAMNVGGKK</sequence>
<organism>
    <name type="scientific">Rickettsia africae (strain ESF-5)</name>
    <dbReference type="NCBI Taxonomy" id="347255"/>
    <lineage>
        <taxon>Bacteria</taxon>
        <taxon>Pseudomonadati</taxon>
        <taxon>Pseudomonadota</taxon>
        <taxon>Alphaproteobacteria</taxon>
        <taxon>Rickettsiales</taxon>
        <taxon>Rickettsiaceae</taxon>
        <taxon>Rickettsieae</taxon>
        <taxon>Rickettsia</taxon>
        <taxon>spotted fever group</taxon>
    </lineage>
</organism>
<keyword id="KW-0963">Cytoplasm</keyword>
<keyword id="KW-0488">Methylation</keyword>
<keyword id="KW-0648">Protein biosynthesis</keyword>
<reference key="1">
    <citation type="journal article" date="2009" name="BMC Genomics">
        <title>Analysis of the Rickettsia africae genome reveals that virulence acquisition in Rickettsia species may be explained by genome reduction.</title>
        <authorList>
            <person name="Fournier P.-E."/>
            <person name="El Karkouri K."/>
            <person name="Leroy Q."/>
            <person name="Robert C."/>
            <person name="Giumelli B."/>
            <person name="Renesto P."/>
            <person name="Socolovschi C."/>
            <person name="Parola P."/>
            <person name="Audic S."/>
            <person name="Raoult D."/>
        </authorList>
    </citation>
    <scope>NUCLEOTIDE SEQUENCE [LARGE SCALE GENOMIC DNA]</scope>
    <source>
        <strain>ESF-5</strain>
    </source>
</reference>
<dbReference type="EMBL" id="CP001612">
    <property type="protein sequence ID" value="ACP53282.1"/>
    <property type="molecule type" value="Genomic_DNA"/>
</dbReference>
<dbReference type="RefSeq" id="WP_012719532.1">
    <property type="nucleotide sequence ID" value="NC_012633.1"/>
</dbReference>
<dbReference type="SMR" id="C3PMX2"/>
<dbReference type="KEGG" id="raf:RAF_ORF0343"/>
<dbReference type="HOGENOM" id="CLU_036856_6_0_5"/>
<dbReference type="Proteomes" id="UP000002305">
    <property type="component" value="Chromosome"/>
</dbReference>
<dbReference type="GO" id="GO:0005737">
    <property type="term" value="C:cytoplasm"/>
    <property type="evidence" value="ECO:0007669"/>
    <property type="project" value="UniProtKB-SubCell"/>
</dbReference>
<dbReference type="GO" id="GO:0016149">
    <property type="term" value="F:translation release factor activity, codon specific"/>
    <property type="evidence" value="ECO:0007669"/>
    <property type="project" value="UniProtKB-UniRule"/>
</dbReference>
<dbReference type="FunFam" id="3.30.160.20:FF:000010">
    <property type="entry name" value="Peptide chain release factor 2"/>
    <property type="match status" value="1"/>
</dbReference>
<dbReference type="Gene3D" id="3.30.160.20">
    <property type="match status" value="1"/>
</dbReference>
<dbReference type="Gene3D" id="3.30.70.1660">
    <property type="match status" value="1"/>
</dbReference>
<dbReference type="Gene3D" id="1.20.58.410">
    <property type="entry name" value="Release factor"/>
    <property type="match status" value="1"/>
</dbReference>
<dbReference type="HAMAP" id="MF_00094">
    <property type="entry name" value="Rel_fac_2"/>
    <property type="match status" value="1"/>
</dbReference>
<dbReference type="InterPro" id="IPR005139">
    <property type="entry name" value="PCRF"/>
</dbReference>
<dbReference type="InterPro" id="IPR000352">
    <property type="entry name" value="Pep_chain_release_fac_I"/>
</dbReference>
<dbReference type="InterPro" id="IPR045853">
    <property type="entry name" value="Pep_chain_release_fac_I_sf"/>
</dbReference>
<dbReference type="InterPro" id="IPR004374">
    <property type="entry name" value="PrfB"/>
</dbReference>
<dbReference type="NCBIfam" id="TIGR00020">
    <property type="entry name" value="prfB"/>
    <property type="match status" value="1"/>
</dbReference>
<dbReference type="PANTHER" id="PTHR43116:SF3">
    <property type="entry name" value="CLASS I PEPTIDE CHAIN RELEASE FACTOR"/>
    <property type="match status" value="1"/>
</dbReference>
<dbReference type="PANTHER" id="PTHR43116">
    <property type="entry name" value="PEPTIDE CHAIN RELEASE FACTOR 2"/>
    <property type="match status" value="1"/>
</dbReference>
<dbReference type="Pfam" id="PF03462">
    <property type="entry name" value="PCRF"/>
    <property type="match status" value="1"/>
</dbReference>
<dbReference type="Pfam" id="PF00472">
    <property type="entry name" value="RF-1"/>
    <property type="match status" value="1"/>
</dbReference>
<dbReference type="SMART" id="SM00937">
    <property type="entry name" value="PCRF"/>
    <property type="match status" value="1"/>
</dbReference>
<dbReference type="SUPFAM" id="SSF75620">
    <property type="entry name" value="Release factor"/>
    <property type="match status" value="1"/>
</dbReference>
<dbReference type="PROSITE" id="PS00745">
    <property type="entry name" value="RF_PROK_I"/>
    <property type="match status" value="1"/>
</dbReference>